<organism>
    <name type="scientific">Plum pox potyvirus (strain D)</name>
    <name type="common">PPV</name>
    <dbReference type="NCBI Taxonomy" id="12212"/>
    <lineage>
        <taxon>Viruses</taxon>
        <taxon>Riboviria</taxon>
        <taxon>Orthornavirae</taxon>
        <taxon>Pisuviricota</taxon>
        <taxon>Stelpaviricetes</taxon>
        <taxon>Patatavirales</taxon>
        <taxon>Potyviridae</taxon>
        <taxon>Potyvirus</taxon>
        <taxon>Potyvirus plumpoxi</taxon>
        <taxon>Plum pox virus</taxon>
    </lineage>
</organism>
<proteinExistence type="inferred from homology"/>
<organismHost>
    <name type="scientific">Prunus armeniaca</name>
    <name type="common">Apricot</name>
    <name type="synonym">Armeniaca vulgaris</name>
    <dbReference type="NCBI Taxonomy" id="36596"/>
</organismHost>
<organismHost>
    <name type="scientific">Prunus cerasifera</name>
    <name type="common">cherry plum</name>
    <dbReference type="NCBI Taxonomy" id="36595"/>
</organismHost>
<organismHost>
    <name type="scientific">Prunus domestica</name>
    <name type="common">Garden plum</name>
    <dbReference type="NCBI Taxonomy" id="3758"/>
</organismHost>
<organismHost>
    <name type="scientific">Prunus glandulosa</name>
    <dbReference type="NCBI Taxonomy" id="105665"/>
</organismHost>
<organismHost>
    <name type="scientific">Prunus persica</name>
    <name type="common">Peach</name>
    <name type="synonym">Amygdalus persica</name>
    <dbReference type="NCBI Taxonomy" id="3760"/>
</organismHost>
<organismHost>
    <name type="scientific">Prunus salicina</name>
    <dbReference type="NCBI Taxonomy" id="88123"/>
</organismHost>
<organismHost>
    <name type="scientific">Prunus spinosa</name>
    <name type="common">Blackthorn</name>
    <name type="synonym">Prunus domestica var. spinosa</name>
    <dbReference type="NCBI Taxonomy" id="114937"/>
</organismHost>
<reference key="1">
    <citation type="journal article" date="1989" name="Nucleic Acids Res.">
        <title>The complete nucleotide sequence of plum pox virus RNA (strain D).</title>
        <authorList>
            <person name="Teycheney P.Y."/>
            <person name="Tavert G."/>
            <person name="Delbos R."/>
            <person name="Ravelonandro M."/>
            <person name="Dunez J."/>
        </authorList>
    </citation>
    <scope>NUCLEOTIDE SEQUENCE [GENOMIC RNA]</scope>
</reference>
<evidence type="ECO:0000250" key="1"/>
<evidence type="ECO:0000250" key="2">
    <source>
        <dbReference type="UniProtKB" id="P04517"/>
    </source>
</evidence>
<evidence type="ECO:0000250" key="3">
    <source>
        <dbReference type="UniProtKB" id="P0CK11"/>
    </source>
</evidence>
<evidence type="ECO:0000255" key="4"/>
<evidence type="ECO:0000255" key="5">
    <source>
        <dbReference type="PROSITE-ProRule" id="PRU01080"/>
    </source>
</evidence>
<evidence type="ECO:0000255" key="6">
    <source>
        <dbReference type="PROSITE-ProRule" id="PRU01219"/>
    </source>
</evidence>
<evidence type="ECO:0000305" key="7"/>
<protein>
    <recommendedName>
        <fullName>P3N-PIPO polyprotein</fullName>
    </recommendedName>
    <component>
        <recommendedName>
            <fullName>P1 protease</fullName>
            <ecNumber>3.4.21.-</ecNumber>
        </recommendedName>
        <alternativeName>
            <fullName>N-terminal protein</fullName>
        </alternativeName>
        <alternativeName>
            <fullName>P1 proteinase</fullName>
        </alternativeName>
    </component>
    <component>
        <recommendedName>
            <fullName>Helper component proteinase</fullName>
            <shortName>HC-pro</shortName>
            <ecNumber>3.4.22.45</ecNumber>
        </recommendedName>
    </component>
    <component>
        <recommendedName>
            <fullName>Movement protein P3N-PIPO</fullName>
        </recommendedName>
        <alternativeName>
            <fullName>Pretty interesting potyviridae ORF</fullName>
            <shortName>PIPO</shortName>
        </alternativeName>
    </component>
</protein>
<comment type="function">
    <molecule>Helper component proteinase</molecule>
    <text evidence="2">Required for aphid transmission and also has proteolytic activity. Only cleaves a Gly-Gly dipeptide at its own C-terminus. Interacts with virions and aphid stylets. Acts as a suppressor of RNA-mediated gene silencing, also known as post-transcriptional gene silencing (PTGS), a mechanism of plant viral defense that limits the accumulation of viral RNAs. May have RNA-binding activity.</text>
</comment>
<comment type="function">
    <molecule>Movement protein P3N-PIPO</molecule>
    <text evidence="3">Allows efficient cell to cell propagation, by bypassing the host cell wall barrier. Transports viral genome to neighboring plant cells directly through plasmosdesmata, without any budding.</text>
</comment>
<comment type="catalytic activity">
    <molecule>Helper component proteinase</molecule>
    <reaction>
        <text>Hydrolyzes a Gly-|-Gly bond at its own C-terminus, commonly in the sequence -Tyr-Xaa-Val-Gly-|-Gly, in the processing of the potyviral polyprotein.</text>
        <dbReference type="EC" id="3.4.22.45"/>
    </reaction>
</comment>
<comment type="subunit">
    <molecule>Movement protein P3N-PIPO</molecule>
    <text evidence="3">Interacts (via PIPO domain) with host PCaP1 protein; this interaction may help to anchor the movement complex to the plasma membrane from which the complex could move to the plasmodesmata.</text>
</comment>
<comment type="subcellular location">
    <molecule>Movement protein P3N-PIPO</molecule>
    <subcellularLocation>
        <location evidence="3">Host cell junction</location>
        <location evidence="3">Host plasmodesma</location>
    </subcellularLocation>
</comment>
<comment type="alternative products">
    <event type="ribosomal frameshifting"/>
    <isoform>
        <id>P0CK03-1</id>
        <name>P3N-PIPO polyprotein</name>
        <sequence type="displayed"/>
    </isoform>
    <isoform>
        <id>P13529-1</id>
        <name>Genome polyprotein</name>
        <sequence type="external"/>
    </isoform>
</comment>
<comment type="domain">
    <text evidence="1">The N-terminus of helper component proteinase is involved in interaction with stylets. The central part is involved in interaction with virions and the C-terminus is involved in cell-to cell movement of the virus (By similarity).</text>
</comment>
<comment type="PTM">
    <text evidence="1">Potyviral RNA is expressed as two polyproteins which undergo post-translational proteolytic processing. Genome polyprotein is processed by NIa-pro, P1 and HC-pro proteinases resulting in the production of at least ten individual proteins. P3N-PIPO is cleaved by P1 and HC-pro proteinases resulting in the production of three individual proteins. The P1 proteinase and the HC-pro cleave only their respective C-termini autocatalytically (By similarity).</text>
</comment>
<comment type="miscellaneous">
    <molecule>Isoform P3N-PIPO polyprotein</molecule>
    <text>Produced by -1 ribosomal frameshifting in P3 ORF.</text>
</comment>
<comment type="similarity">
    <text evidence="7">Belongs to the potyviridae P3N-PIPO polyprotein family.</text>
</comment>
<feature type="chain" id="PRO_0000420075" description="P3N-PIPO polyprotein">
    <location>
        <begin position="1"/>
        <end position="1024"/>
    </location>
</feature>
<feature type="chain" id="PRO_0000420076" description="P1 protease" evidence="4">
    <location>
        <begin position="1"/>
        <end position="308"/>
    </location>
</feature>
<feature type="chain" id="PRO_0000420077" description="Helper component proteinase" evidence="4">
    <location>
        <begin position="309"/>
        <end position="767"/>
    </location>
</feature>
<feature type="chain" id="PRO_0000408547" description="Movement protein P3N-PIPO">
    <location>
        <begin position="768"/>
        <end position="1024"/>
    </location>
</feature>
<feature type="domain" description="Peptidase S30" evidence="6">
    <location>
        <begin position="165"/>
        <end position="308"/>
    </location>
</feature>
<feature type="domain" description="Peptidase C6" evidence="5">
    <location>
        <begin position="645"/>
        <end position="767"/>
    </location>
</feature>
<feature type="short sequence motif" description="Involved in interaction with stylet and aphid transmission" evidence="1">
    <location>
        <begin position="360"/>
        <end position="363"/>
    </location>
</feature>
<feature type="short sequence motif" description="Involved in virions binding and aphid transmission" evidence="1">
    <location>
        <begin position="619"/>
        <end position="621"/>
    </location>
</feature>
<feature type="active site" description="For P1 proteinase activity" evidence="6">
    <location>
        <position position="216"/>
    </location>
</feature>
<feature type="active site" description="For P1 proteinase activity" evidence="6">
    <location>
        <position position="225"/>
    </location>
</feature>
<feature type="active site" description="For P1 proteinase activity" evidence="6">
    <location>
        <position position="259"/>
    </location>
</feature>
<feature type="active site" description="For helper component proteinase activity" evidence="5">
    <location>
        <position position="653"/>
    </location>
</feature>
<feature type="active site" description="For helper component proteinase activity" evidence="5">
    <location>
        <position position="726"/>
    </location>
</feature>
<feature type="site" description="Cleavage; by P1 proteinase" evidence="6">
    <location>
        <begin position="308"/>
        <end position="309"/>
    </location>
</feature>
<feature type="site" description="Cleavage; by autolysis" evidence="5">
    <location>
        <begin position="767"/>
        <end position="768"/>
    </location>
</feature>
<feature type="unsure residue">
    <location>
        <begin position="921"/>
        <end position="927"/>
    </location>
</feature>
<dbReference type="EC" id="3.4.21.-"/>
<dbReference type="EC" id="3.4.22.45"/>
<dbReference type="EMBL" id="X16415">
    <property type="status" value="NOT_ANNOTATED_CDS"/>
    <property type="molecule type" value="Genomic_RNA"/>
</dbReference>
<dbReference type="SMR" id="P0CK03"/>
<dbReference type="Proteomes" id="UP000006849">
    <property type="component" value="Segment"/>
</dbReference>
<dbReference type="GO" id="GO:0044219">
    <property type="term" value="C:host cell plasmodesma"/>
    <property type="evidence" value="ECO:0007669"/>
    <property type="project" value="UniProtKB-SubCell"/>
</dbReference>
<dbReference type="GO" id="GO:0004197">
    <property type="term" value="F:cysteine-type endopeptidase activity"/>
    <property type="evidence" value="ECO:0007669"/>
    <property type="project" value="InterPro"/>
</dbReference>
<dbReference type="GO" id="GO:0008236">
    <property type="term" value="F:serine-type peptidase activity"/>
    <property type="evidence" value="ECO:0007669"/>
    <property type="project" value="UniProtKB-KW"/>
</dbReference>
<dbReference type="GO" id="GO:0006508">
    <property type="term" value="P:proteolysis"/>
    <property type="evidence" value="ECO:0007669"/>
    <property type="project" value="UniProtKB-KW"/>
</dbReference>
<dbReference type="GO" id="GO:0052170">
    <property type="term" value="P:symbiont-mediated suppression of host innate immune response"/>
    <property type="evidence" value="ECO:0007669"/>
    <property type="project" value="UniProtKB-KW"/>
</dbReference>
<dbReference type="GO" id="GO:0046740">
    <property type="term" value="P:transport of virus in host, cell to cell"/>
    <property type="evidence" value="ECO:0007669"/>
    <property type="project" value="UniProtKB-KW"/>
</dbReference>
<dbReference type="GO" id="GO:0075523">
    <property type="term" value="P:viral translational frameshifting"/>
    <property type="evidence" value="ECO:0007669"/>
    <property type="project" value="UniProtKB-KW"/>
</dbReference>
<dbReference type="Gene3D" id="3.90.70.150">
    <property type="entry name" value="Helper component proteinase"/>
    <property type="match status" value="1"/>
</dbReference>
<dbReference type="InterPro" id="IPR001456">
    <property type="entry name" value="HC-pro"/>
</dbReference>
<dbReference type="InterPro" id="IPR031159">
    <property type="entry name" value="HC_PRO_CPD_dom"/>
</dbReference>
<dbReference type="InterPro" id="IPR042308">
    <property type="entry name" value="HC_PRO_CPD_sf"/>
</dbReference>
<dbReference type="InterPro" id="IPR002540">
    <property type="entry name" value="Pept_S30_P1_potyvir"/>
</dbReference>
<dbReference type="InterPro" id="IPR039560">
    <property type="entry name" value="Potyvirid-P3"/>
</dbReference>
<dbReference type="Pfam" id="PF00851">
    <property type="entry name" value="Peptidase_C6"/>
    <property type="match status" value="1"/>
</dbReference>
<dbReference type="Pfam" id="PF01577">
    <property type="entry name" value="Peptidase_S30"/>
    <property type="match status" value="1"/>
</dbReference>
<dbReference type="Pfam" id="PF13608">
    <property type="entry name" value="Potyvirid-P3"/>
    <property type="match status" value="1"/>
</dbReference>
<dbReference type="PROSITE" id="PS51744">
    <property type="entry name" value="HC_PRO_CPD"/>
    <property type="match status" value="1"/>
</dbReference>
<dbReference type="PROSITE" id="PS51871">
    <property type="entry name" value="PV_P1_PRO"/>
    <property type="match status" value="1"/>
</dbReference>
<keyword id="KW-1031">Host cell junction</keyword>
<keyword id="KW-0945">Host-virus interaction</keyword>
<keyword id="KW-0378">Hydrolase</keyword>
<keyword id="KW-1090">Inhibition of host innate immune response by virus</keyword>
<keyword id="KW-0645">Protease</keyword>
<keyword id="KW-0688">Ribosomal frameshifting</keyword>
<keyword id="KW-0720">Serine protease</keyword>
<keyword id="KW-0941">Suppressor of RNA silencing</keyword>
<keyword id="KW-0813">Transport</keyword>
<keyword id="KW-0899">Viral immunoevasion</keyword>
<keyword id="KW-0916">Viral movement protein</keyword>
<name>MVP_PPVD</name>
<accession>P0CK03</accession>
<sequence>MSTIVFGSFTCHLDAAIHQDNADRLAKAWTRPENRQVSNVHLLCRRAAKSLINTYESATASAWKGLEEKLQPMFAKREFSKTVTKRKGLRCFKESSEKFIEKKLRKQYQEERERFQFVNGPDAIVNQISVDKCEASVWVPFPHIIEKPSFATPSMKKKVVFTKVRMSEASLQLFMRRVAANAKANGQKVEIIGRKRVVGNYTTKSRLTYFRTHVRHLDGSKPRYDLVLDEATKKILQLFANTSRFHHVHKKGEVTPGMSGFVVNPINLSDPMQVYDTDLFIVRGKHNSILVDSRCKVSKKQSNEIIHYSDPGKQFSDGFTNSFMQCKLRETDHQSTSDLDVKECGDVAALVCQAIIPCGKITCLQCAQKYSYMSQQEIRDRFSTVIEQHEKTAMDNYPQFSHVLAFLKRYRELMRVENQNYEAFKDITHMIGEDRKEAPFSHLQQINELIIKGGMMSAQDYIEASDHLRELARYQKNRTENIRSGSIKAFRNKISSKAHVNMQLMCDNQLDTNGNFVWGQREYHAKRFFRNYFDVIDVSEGYRRHIVRENPRGIRKLAIGNLVISTNLAALRKQLLGEECIHFEVSKECTSRRGENFVYQCCCVTHEDGTPLESEIISPTKNHLVVGNTGDSKYVDLPTAKGGAMFIAKAGYCYINIFLAMLININEDEAKSFTKTVRDTLVPKLGTWPSMMDLATACHFLAVLYPETRNAELPRILVDHEAKIFHVVDSFGSLSTGMHVLKANTINQLISFASDTLDSNMKTYLVGGSEVDKCDEFKNVKLLIRSIYKPQIMEQVLKEEPYLLLMSVLSPGVLMALFNSGSLEKATQYWITRSHTLAAITSMLSALAAKVSLASTLNAQMSVIDEHAAVLCDSVFDGTKPYASYMMAVKTLERMKARTESDHTLNDLGFSVLRQATPHLVEKKLSPGIGASLERVKLVGKILCNLGIAAVAKTYTKTFHPKRRRRFRRQVRHLRSVITWQPVQTPERRSPTEKRRCGLLYTPVDGEAILQSHRNFHKFSSKHS</sequence>